<protein>
    <recommendedName>
        <fullName evidence="1">Cell division activator CedA</fullName>
    </recommendedName>
</protein>
<accession>B4TUD9</accession>
<reference key="1">
    <citation type="journal article" date="2011" name="J. Bacteriol.">
        <title>Comparative genomics of 28 Salmonella enterica isolates: evidence for CRISPR-mediated adaptive sublineage evolution.</title>
        <authorList>
            <person name="Fricke W.F."/>
            <person name="Mammel M.K."/>
            <person name="McDermott P.F."/>
            <person name="Tartera C."/>
            <person name="White D.G."/>
            <person name="Leclerc J.E."/>
            <person name="Ravel J."/>
            <person name="Cebula T.A."/>
        </authorList>
    </citation>
    <scope>NUCLEOTIDE SEQUENCE [LARGE SCALE GENOMIC DNA]</scope>
    <source>
        <strain>CVM19633</strain>
    </source>
</reference>
<organism>
    <name type="scientific">Salmonella schwarzengrund (strain CVM19633)</name>
    <dbReference type="NCBI Taxonomy" id="439843"/>
    <lineage>
        <taxon>Bacteria</taxon>
        <taxon>Pseudomonadati</taxon>
        <taxon>Pseudomonadota</taxon>
        <taxon>Gammaproteobacteria</taxon>
        <taxon>Enterobacterales</taxon>
        <taxon>Enterobacteriaceae</taxon>
        <taxon>Salmonella</taxon>
    </lineage>
</organism>
<evidence type="ECO:0000255" key="1">
    <source>
        <dbReference type="HAMAP-Rule" id="MF_01580"/>
    </source>
</evidence>
<proteinExistence type="inferred from homology"/>
<name>CEDA_SALSV</name>
<feature type="chain" id="PRO_1000200996" description="Cell division activator CedA">
    <location>
        <begin position="1"/>
        <end position="80"/>
    </location>
</feature>
<sequence>MMKPLRQQNRQIISYIPRVEPAPPEHAIKMDTFRDVWILRGKYVAFVLTGESFQRSPAFSVPESAQRWANQVRQENEIAD</sequence>
<dbReference type="EMBL" id="CP001127">
    <property type="protein sequence ID" value="ACF90706.1"/>
    <property type="molecule type" value="Genomic_DNA"/>
</dbReference>
<dbReference type="RefSeq" id="WP_000977510.1">
    <property type="nucleotide sequence ID" value="NC_011094.1"/>
</dbReference>
<dbReference type="SMR" id="B4TUD9"/>
<dbReference type="KEGG" id="sew:SeSA_A1416"/>
<dbReference type="HOGENOM" id="CLU_167445_0_0_6"/>
<dbReference type="Proteomes" id="UP000001865">
    <property type="component" value="Chromosome"/>
</dbReference>
<dbReference type="GO" id="GO:0003677">
    <property type="term" value="F:DNA binding"/>
    <property type="evidence" value="ECO:0007669"/>
    <property type="project" value="UniProtKB-UniRule"/>
</dbReference>
<dbReference type="GO" id="GO:0051301">
    <property type="term" value="P:cell division"/>
    <property type="evidence" value="ECO:0007669"/>
    <property type="project" value="UniProtKB-UniRule"/>
</dbReference>
<dbReference type="Gene3D" id="3.30.730.20">
    <property type="entry name" value="Cell division activator CedA"/>
    <property type="match status" value="1"/>
</dbReference>
<dbReference type="HAMAP" id="MF_01580">
    <property type="entry name" value="CedA"/>
    <property type="match status" value="1"/>
</dbReference>
<dbReference type="InterPro" id="IPR038463">
    <property type="entry name" value="CedA-like_sf"/>
</dbReference>
<dbReference type="InterPro" id="IPR019666">
    <property type="entry name" value="Cell_div_activator_CedA"/>
</dbReference>
<dbReference type="NCBIfam" id="NF007510">
    <property type="entry name" value="PRK10113.1"/>
    <property type="match status" value="1"/>
</dbReference>
<dbReference type="Pfam" id="PF10729">
    <property type="entry name" value="CedA"/>
    <property type="match status" value="1"/>
</dbReference>
<gene>
    <name evidence="1" type="primary">cedA</name>
    <name type="ordered locus">SeSA_A1416</name>
</gene>
<keyword id="KW-0131">Cell cycle</keyword>
<keyword id="KW-0132">Cell division</keyword>
<keyword id="KW-0238">DNA-binding</keyword>
<comment type="function">
    <text evidence="1">Activates the cell division inhibited by chromosomal DNA over-replication.</text>
</comment>
<comment type="similarity">
    <text evidence="1">Belongs to the CedA family.</text>
</comment>